<keyword id="KW-0997">Cell inner membrane</keyword>
<keyword id="KW-1003">Cell membrane</keyword>
<keyword id="KW-0472">Membrane</keyword>
<keyword id="KW-1185">Reference proteome</keyword>
<keyword id="KW-0812">Transmembrane</keyword>
<keyword id="KW-1133">Transmembrane helix</keyword>
<feature type="chain" id="PRO_0000160284" description="Protein PsiE">
    <location>
        <begin position="1"/>
        <end position="136"/>
    </location>
</feature>
<feature type="topological domain" description="Cytoplasmic" evidence="2">
    <location>
        <begin position="1"/>
        <end position="14"/>
    </location>
</feature>
<feature type="transmembrane region" description="Helical" evidence="2">
    <location>
        <begin position="15"/>
        <end position="35"/>
    </location>
</feature>
<feature type="topological domain" description="Periplasmic" evidence="2">
    <location>
        <begin position="36"/>
        <end position="54"/>
    </location>
</feature>
<feature type="transmembrane region" description="Helical" evidence="2">
    <location>
        <begin position="55"/>
        <end position="75"/>
    </location>
</feature>
<feature type="topological domain" description="Cytoplasmic" evidence="2">
    <location>
        <begin position="76"/>
        <end position="81"/>
    </location>
</feature>
<feature type="transmembrane region" description="Helical" evidence="2">
    <location>
        <begin position="82"/>
        <end position="102"/>
    </location>
</feature>
<feature type="topological domain" description="Periplasmic" evidence="2">
    <location>
        <begin position="103"/>
        <end position="107"/>
    </location>
</feature>
<feature type="transmembrane region" description="Helical" evidence="2">
    <location>
        <begin position="108"/>
        <end position="128"/>
    </location>
</feature>
<feature type="topological domain" description="Cytoplasmic" evidence="2">
    <location>
        <begin position="129"/>
        <end position="136"/>
    </location>
</feature>
<gene>
    <name type="primary">psiE</name>
    <name type="ordered locus">c5001</name>
</gene>
<organism>
    <name type="scientific">Escherichia coli O6:H1 (strain CFT073 / ATCC 700928 / UPEC)</name>
    <dbReference type="NCBI Taxonomy" id="199310"/>
    <lineage>
        <taxon>Bacteria</taxon>
        <taxon>Pseudomonadati</taxon>
        <taxon>Pseudomonadota</taxon>
        <taxon>Gammaproteobacteria</taxon>
        <taxon>Enterobacterales</taxon>
        <taxon>Enterobacteriaceae</taxon>
        <taxon>Escherichia</taxon>
    </lineage>
</organism>
<protein>
    <recommendedName>
        <fullName>Protein PsiE</fullName>
    </recommendedName>
</protein>
<name>PSIE_ECOL6</name>
<sequence>MTSLSRPRVEFISTILQTVLNLGLLCLGLILVVFLGKETVHLADVLFAPEQTSKYELVEGLVVYFLYFEFIALIVKYFQSGFHFPLRYFVYIGITAIVRLIIVDHKSPLDVLIYSAAILLLVITLWLCNSKRLKRE</sequence>
<accession>P0A7C9</accession>
<accession>P23896</accession>
<dbReference type="EMBL" id="AE014075">
    <property type="protein sequence ID" value="AAN83427.1"/>
    <property type="molecule type" value="Genomic_DNA"/>
</dbReference>
<dbReference type="RefSeq" id="WP_000202902.1">
    <property type="nucleotide sequence ID" value="NZ_CP051263.1"/>
</dbReference>
<dbReference type="SMR" id="P0A7C9"/>
<dbReference type="STRING" id="199310.c5001"/>
<dbReference type="GeneID" id="93777857"/>
<dbReference type="KEGG" id="ecc:c5001"/>
<dbReference type="eggNOG" id="COG3223">
    <property type="taxonomic scope" value="Bacteria"/>
</dbReference>
<dbReference type="HOGENOM" id="CLU_127561_0_1_6"/>
<dbReference type="BioCyc" id="ECOL199310:C5001-MONOMER"/>
<dbReference type="Proteomes" id="UP000001410">
    <property type="component" value="Chromosome"/>
</dbReference>
<dbReference type="GO" id="GO:0005886">
    <property type="term" value="C:plasma membrane"/>
    <property type="evidence" value="ECO:0007669"/>
    <property type="project" value="UniProtKB-SubCell"/>
</dbReference>
<dbReference type="GO" id="GO:0016036">
    <property type="term" value="P:cellular response to phosphate starvation"/>
    <property type="evidence" value="ECO:0007669"/>
    <property type="project" value="InterPro"/>
</dbReference>
<dbReference type="HAMAP" id="MF_01048">
    <property type="entry name" value="PsiE"/>
    <property type="match status" value="1"/>
</dbReference>
<dbReference type="InterPro" id="IPR009315">
    <property type="entry name" value="P_starv_induced_PsiE"/>
</dbReference>
<dbReference type="InterPro" id="IPR020948">
    <property type="entry name" value="P_starv_induced_PsiE-like"/>
</dbReference>
<dbReference type="NCBIfam" id="NF002764">
    <property type="entry name" value="PRK02833.1-2"/>
    <property type="match status" value="1"/>
</dbReference>
<dbReference type="NCBIfam" id="NF002765">
    <property type="entry name" value="PRK02833.1-3"/>
    <property type="match status" value="1"/>
</dbReference>
<dbReference type="NCBIfam" id="NF002767">
    <property type="entry name" value="PRK02833.1-5"/>
    <property type="match status" value="1"/>
</dbReference>
<dbReference type="PANTHER" id="PTHR37819">
    <property type="entry name" value="PROTEIN PSIE"/>
    <property type="match status" value="1"/>
</dbReference>
<dbReference type="PANTHER" id="PTHR37819:SF1">
    <property type="entry name" value="PROTEIN PSIE"/>
    <property type="match status" value="1"/>
</dbReference>
<dbReference type="Pfam" id="PF06146">
    <property type="entry name" value="PsiE"/>
    <property type="match status" value="1"/>
</dbReference>
<dbReference type="PIRSF" id="PIRSF029598">
    <property type="entry name" value="PsiE"/>
    <property type="match status" value="1"/>
</dbReference>
<comment type="subcellular location">
    <subcellularLocation>
        <location evidence="1">Cell inner membrane</location>
        <topology evidence="1">Multi-pass membrane protein</topology>
    </subcellularLocation>
</comment>
<comment type="similarity">
    <text evidence="3">Belongs to the PsiE family.</text>
</comment>
<evidence type="ECO:0000250" key="1"/>
<evidence type="ECO:0000255" key="2"/>
<evidence type="ECO:0000305" key="3"/>
<reference key="1">
    <citation type="journal article" date="2002" name="Proc. Natl. Acad. Sci. U.S.A.">
        <title>Extensive mosaic structure revealed by the complete genome sequence of uropathogenic Escherichia coli.</title>
        <authorList>
            <person name="Welch R.A."/>
            <person name="Burland V."/>
            <person name="Plunkett G. III"/>
            <person name="Redford P."/>
            <person name="Roesch P."/>
            <person name="Rasko D."/>
            <person name="Buckles E.L."/>
            <person name="Liou S.-R."/>
            <person name="Boutin A."/>
            <person name="Hackett J."/>
            <person name="Stroud D."/>
            <person name="Mayhew G.F."/>
            <person name="Rose D.J."/>
            <person name="Zhou S."/>
            <person name="Schwartz D.C."/>
            <person name="Perna N.T."/>
            <person name="Mobley H.L.T."/>
            <person name="Donnenberg M.S."/>
            <person name="Blattner F.R."/>
        </authorList>
    </citation>
    <scope>NUCLEOTIDE SEQUENCE [LARGE SCALE GENOMIC DNA]</scope>
    <source>
        <strain>CFT073 / ATCC 700928 / UPEC</strain>
    </source>
</reference>
<proteinExistence type="inferred from homology"/>